<accession>C3KVP2</accession>
<dbReference type="EMBL" id="CP001083">
    <property type="protein sequence ID" value="ACQ53278.1"/>
    <property type="molecule type" value="Genomic_DNA"/>
</dbReference>
<dbReference type="RefSeq" id="WP_003360198.1">
    <property type="nucleotide sequence ID" value="NC_012658.1"/>
</dbReference>
<dbReference type="SMR" id="C3KVP2"/>
<dbReference type="KEGG" id="cbi:CLJ_B3780"/>
<dbReference type="HOGENOM" id="CLU_073626_1_0_9"/>
<dbReference type="Proteomes" id="UP000002333">
    <property type="component" value="Chromosome"/>
</dbReference>
<dbReference type="GO" id="GO:0022627">
    <property type="term" value="C:cytosolic small ribosomal subunit"/>
    <property type="evidence" value="ECO:0007669"/>
    <property type="project" value="TreeGrafter"/>
</dbReference>
<dbReference type="GO" id="GO:0019843">
    <property type="term" value="F:rRNA binding"/>
    <property type="evidence" value="ECO:0007669"/>
    <property type="project" value="UniProtKB-UniRule"/>
</dbReference>
<dbReference type="GO" id="GO:0003735">
    <property type="term" value="F:structural constituent of ribosome"/>
    <property type="evidence" value="ECO:0007669"/>
    <property type="project" value="InterPro"/>
</dbReference>
<dbReference type="GO" id="GO:0006412">
    <property type="term" value="P:translation"/>
    <property type="evidence" value="ECO:0007669"/>
    <property type="project" value="UniProtKB-UniRule"/>
</dbReference>
<dbReference type="CDD" id="cd00364">
    <property type="entry name" value="Ribosomal_uS17"/>
    <property type="match status" value="1"/>
</dbReference>
<dbReference type="FunFam" id="2.40.50.140:FF:000026">
    <property type="entry name" value="30S ribosomal protein S17"/>
    <property type="match status" value="1"/>
</dbReference>
<dbReference type="Gene3D" id="2.40.50.140">
    <property type="entry name" value="Nucleic acid-binding proteins"/>
    <property type="match status" value="1"/>
</dbReference>
<dbReference type="HAMAP" id="MF_01345_B">
    <property type="entry name" value="Ribosomal_uS17_B"/>
    <property type="match status" value="1"/>
</dbReference>
<dbReference type="InterPro" id="IPR012340">
    <property type="entry name" value="NA-bd_OB-fold"/>
</dbReference>
<dbReference type="InterPro" id="IPR000266">
    <property type="entry name" value="Ribosomal_uS17"/>
</dbReference>
<dbReference type="InterPro" id="IPR019984">
    <property type="entry name" value="Ribosomal_uS17_bact/chlr"/>
</dbReference>
<dbReference type="NCBIfam" id="NF004123">
    <property type="entry name" value="PRK05610.1"/>
    <property type="match status" value="1"/>
</dbReference>
<dbReference type="NCBIfam" id="TIGR03635">
    <property type="entry name" value="uS17_bact"/>
    <property type="match status" value="1"/>
</dbReference>
<dbReference type="PANTHER" id="PTHR10744">
    <property type="entry name" value="40S RIBOSOMAL PROTEIN S11 FAMILY MEMBER"/>
    <property type="match status" value="1"/>
</dbReference>
<dbReference type="PANTHER" id="PTHR10744:SF1">
    <property type="entry name" value="SMALL RIBOSOMAL SUBUNIT PROTEIN US17M"/>
    <property type="match status" value="1"/>
</dbReference>
<dbReference type="Pfam" id="PF00366">
    <property type="entry name" value="Ribosomal_S17"/>
    <property type="match status" value="1"/>
</dbReference>
<dbReference type="PRINTS" id="PR00973">
    <property type="entry name" value="RIBOSOMALS17"/>
</dbReference>
<dbReference type="SUPFAM" id="SSF50249">
    <property type="entry name" value="Nucleic acid-binding proteins"/>
    <property type="match status" value="1"/>
</dbReference>
<reference key="1">
    <citation type="submission" date="2008-05" db="EMBL/GenBank/DDBJ databases">
        <title>Genome sequence of Clostridium botulinum Ba4 strain 657.</title>
        <authorList>
            <person name="Shrivastava S."/>
            <person name="Brown J.L."/>
            <person name="Bruce D."/>
            <person name="Detter C."/>
            <person name="Munk C."/>
            <person name="Smith L.A."/>
            <person name="Smith T.J."/>
            <person name="Sutton G."/>
            <person name="Brettin T.S."/>
        </authorList>
    </citation>
    <scope>NUCLEOTIDE SEQUENCE [LARGE SCALE GENOMIC DNA]</scope>
    <source>
        <strain>657 / Type Ba4</strain>
    </source>
</reference>
<proteinExistence type="inferred from homology"/>
<organism>
    <name type="scientific">Clostridium botulinum (strain 657 / Type Ba4)</name>
    <dbReference type="NCBI Taxonomy" id="515621"/>
    <lineage>
        <taxon>Bacteria</taxon>
        <taxon>Bacillati</taxon>
        <taxon>Bacillota</taxon>
        <taxon>Clostridia</taxon>
        <taxon>Eubacteriales</taxon>
        <taxon>Clostridiaceae</taxon>
        <taxon>Clostridium</taxon>
    </lineage>
</organism>
<gene>
    <name evidence="1" type="primary">rpsQ</name>
    <name type="ordered locus">CLJ_B3780</name>
</gene>
<evidence type="ECO:0000255" key="1">
    <source>
        <dbReference type="HAMAP-Rule" id="MF_01345"/>
    </source>
</evidence>
<evidence type="ECO:0000305" key="2"/>
<protein>
    <recommendedName>
        <fullName evidence="1">Small ribosomal subunit protein uS17</fullName>
    </recommendedName>
    <alternativeName>
        <fullName evidence="2">30S ribosomal protein S17</fullName>
    </alternativeName>
</protein>
<keyword id="KW-0687">Ribonucleoprotein</keyword>
<keyword id="KW-0689">Ribosomal protein</keyword>
<keyword id="KW-0694">RNA-binding</keyword>
<keyword id="KW-0699">rRNA-binding</keyword>
<feature type="chain" id="PRO_1000214777" description="Small ribosomal subunit protein uS17">
    <location>
        <begin position="1"/>
        <end position="84"/>
    </location>
</feature>
<name>RS17_CLOB6</name>
<sequence>MERSNRKTRIGRVVSNKMDKTIVVAVETKVRHPLYGKIMNRTTKFKAHDENNTANINDKVLIMETRPLSKQKRWRLVEVVEKAK</sequence>
<comment type="function">
    <text evidence="1">One of the primary rRNA binding proteins, it binds specifically to the 5'-end of 16S ribosomal RNA.</text>
</comment>
<comment type="subunit">
    <text evidence="1">Part of the 30S ribosomal subunit.</text>
</comment>
<comment type="similarity">
    <text evidence="1">Belongs to the universal ribosomal protein uS17 family.</text>
</comment>